<comment type="function">
    <text evidence="1">Necessary for the introduction of cis unsaturation into fatty acids. Catalyzes the dehydration of (3R)-3-hydroxydecanoyl-ACP to E-(2)-decenoyl-ACP and then its isomerization to Z-(3)-decenoyl-ACP. Can catalyze the dehydratase reaction for beta-hydroxyacyl-ACPs with saturated chain lengths up to 16:0, being most active on intermediate chain length.</text>
</comment>
<comment type="catalytic activity">
    <reaction evidence="1">
        <text>a (3R)-hydroxyacyl-[ACP] = a (2E)-enoyl-[ACP] + H2O</text>
        <dbReference type="Rhea" id="RHEA:13097"/>
        <dbReference type="Rhea" id="RHEA-COMP:9925"/>
        <dbReference type="Rhea" id="RHEA-COMP:9945"/>
        <dbReference type="ChEBI" id="CHEBI:15377"/>
        <dbReference type="ChEBI" id="CHEBI:78784"/>
        <dbReference type="ChEBI" id="CHEBI:78827"/>
        <dbReference type="EC" id="4.2.1.59"/>
    </reaction>
</comment>
<comment type="catalytic activity">
    <reaction evidence="1">
        <text>(3R)-hydroxydecanoyl-[ACP] = (2E)-decenoyl-[ACP] + H2O</text>
        <dbReference type="Rhea" id="RHEA:41860"/>
        <dbReference type="Rhea" id="RHEA-COMP:9638"/>
        <dbReference type="Rhea" id="RHEA-COMP:9639"/>
        <dbReference type="ChEBI" id="CHEBI:15377"/>
        <dbReference type="ChEBI" id="CHEBI:78466"/>
        <dbReference type="ChEBI" id="CHEBI:78467"/>
    </reaction>
</comment>
<comment type="catalytic activity">
    <reaction evidence="1">
        <text>(2E)-decenoyl-[ACP] = (3Z)-decenoyl-[ACP]</text>
        <dbReference type="Rhea" id="RHEA:23568"/>
        <dbReference type="Rhea" id="RHEA-COMP:9639"/>
        <dbReference type="Rhea" id="RHEA-COMP:9927"/>
        <dbReference type="ChEBI" id="CHEBI:78467"/>
        <dbReference type="ChEBI" id="CHEBI:78798"/>
        <dbReference type="EC" id="5.3.3.14"/>
    </reaction>
</comment>
<comment type="pathway">
    <text evidence="1">Lipid metabolism; fatty acid biosynthesis.</text>
</comment>
<comment type="subunit">
    <text evidence="1">Homodimer.</text>
</comment>
<comment type="subcellular location">
    <subcellularLocation>
        <location evidence="1">Cytoplasm</location>
    </subcellularLocation>
</comment>
<comment type="similarity">
    <text evidence="1">Belongs to the thioester dehydratase family. FabA subfamily.</text>
</comment>
<name>FABA_VIBC3</name>
<keyword id="KW-0002">3D-structure</keyword>
<keyword id="KW-0963">Cytoplasm</keyword>
<keyword id="KW-0275">Fatty acid biosynthesis</keyword>
<keyword id="KW-0276">Fatty acid metabolism</keyword>
<keyword id="KW-0413">Isomerase</keyword>
<keyword id="KW-0444">Lipid biosynthesis</keyword>
<keyword id="KW-0443">Lipid metabolism</keyword>
<keyword id="KW-0456">Lyase</keyword>
<organism>
    <name type="scientific">Vibrio cholerae serotype O1 (strain ATCC 39541 / Classical Ogawa 395 / O395)</name>
    <dbReference type="NCBI Taxonomy" id="345073"/>
    <lineage>
        <taxon>Bacteria</taxon>
        <taxon>Pseudomonadati</taxon>
        <taxon>Pseudomonadota</taxon>
        <taxon>Gammaproteobacteria</taxon>
        <taxon>Vibrionales</taxon>
        <taxon>Vibrionaceae</taxon>
        <taxon>Vibrio</taxon>
    </lineage>
</organism>
<accession>A5F850</accession>
<accession>C3M0P3</accession>
<feature type="chain" id="PRO_1000072263" description="3-hydroxydecanoyl-[acyl-carrier-protein] dehydratase">
    <location>
        <begin position="1"/>
        <end position="172"/>
    </location>
</feature>
<feature type="active site" evidence="1">
    <location>
        <position position="71"/>
    </location>
</feature>
<feature type="helix" evidence="2">
    <location>
        <begin position="10"/>
        <end position="17"/>
    </location>
</feature>
<feature type="strand" evidence="2">
    <location>
        <begin position="24"/>
        <end position="26"/>
    </location>
</feature>
<feature type="turn" evidence="2">
    <location>
        <begin position="32"/>
        <end position="34"/>
    </location>
</feature>
<feature type="strand" evidence="2">
    <location>
        <begin position="38"/>
        <end position="46"/>
    </location>
</feature>
<feature type="strand" evidence="2">
    <location>
        <begin position="54"/>
        <end position="60"/>
    </location>
</feature>
<feature type="helix" evidence="2">
    <location>
        <begin position="67"/>
        <end position="70"/>
    </location>
</feature>
<feature type="helix" evidence="2">
    <location>
        <begin position="80"/>
        <end position="97"/>
    </location>
</feature>
<feature type="strand" evidence="2">
    <location>
        <begin position="102"/>
        <end position="114"/>
    </location>
</feature>
<feature type="strand" evidence="2">
    <location>
        <begin position="124"/>
        <end position="135"/>
    </location>
</feature>
<feature type="strand" evidence="2">
    <location>
        <begin position="137"/>
        <end position="150"/>
    </location>
</feature>
<feature type="strand" evidence="2">
    <location>
        <begin position="153"/>
        <end position="167"/>
    </location>
</feature>
<reference key="1">
    <citation type="submission" date="2007-03" db="EMBL/GenBank/DDBJ databases">
        <authorList>
            <person name="Heidelberg J."/>
        </authorList>
    </citation>
    <scope>NUCLEOTIDE SEQUENCE [LARGE SCALE GENOMIC DNA]</scope>
    <source>
        <strain>ATCC 39541 / Classical Ogawa 395 / O395</strain>
    </source>
</reference>
<reference key="2">
    <citation type="journal article" date="2008" name="PLoS ONE">
        <title>A recalibrated molecular clock and independent origins for the cholera pandemic clones.</title>
        <authorList>
            <person name="Feng L."/>
            <person name="Reeves P.R."/>
            <person name="Lan R."/>
            <person name="Ren Y."/>
            <person name="Gao C."/>
            <person name="Zhou Z."/>
            <person name="Ren Y."/>
            <person name="Cheng J."/>
            <person name="Wang W."/>
            <person name="Wang J."/>
            <person name="Qian W."/>
            <person name="Li D."/>
            <person name="Wang L."/>
        </authorList>
    </citation>
    <scope>NUCLEOTIDE SEQUENCE [LARGE SCALE GENOMIC DNA]</scope>
    <source>
        <strain>ATCC 39541 / Classical Ogawa 395 / O395</strain>
    </source>
</reference>
<evidence type="ECO:0000255" key="1">
    <source>
        <dbReference type="HAMAP-Rule" id="MF_00405"/>
    </source>
</evidence>
<evidence type="ECO:0007829" key="2">
    <source>
        <dbReference type="PDB" id="6B7J"/>
    </source>
</evidence>
<gene>
    <name evidence="1" type="primary">fabA</name>
    <name type="ordered locus">VC0395_A1091</name>
    <name type="ordered locus">VC395_1603</name>
</gene>
<proteinExistence type="evidence at protein level"/>
<sequence>MQNKRDSYNREDLLASSQGELFGEGYPQLPAPNMLMMDRITKMSETEGEFGKGLILAELDITPDLWFFDCHFPGDPVMPGCLGLDAMWQLVGFFLGWVGGKGKGRALGVGEVKFTGQILPTAKKVTYEINMKRVVNRKLVMGLADGRVLVDGKEIYVAKDLKVGLFQDTSAF</sequence>
<protein>
    <recommendedName>
        <fullName evidence="1">3-hydroxydecanoyl-[acyl-carrier-protein] dehydratase</fullName>
        <ecNumber evidence="1">4.2.1.59</ecNumber>
    </recommendedName>
    <alternativeName>
        <fullName evidence="1">3-hydroxyacyl-[acyl-carrier-protein] dehydratase FabA</fullName>
    </alternativeName>
    <alternativeName>
        <fullName evidence="1">Beta-hydroxydecanoyl thioester dehydrase</fullName>
    </alternativeName>
    <alternativeName>
        <fullName evidence="1">Trans-2-decenoyl-[acyl-carrier-protein] isomerase</fullName>
        <ecNumber evidence="1">5.3.3.14</ecNumber>
    </alternativeName>
</protein>
<dbReference type="EC" id="4.2.1.59" evidence="1"/>
<dbReference type="EC" id="5.3.3.14" evidence="1"/>
<dbReference type="EMBL" id="CP000627">
    <property type="protein sequence ID" value="ABQ20718.1"/>
    <property type="molecule type" value="Genomic_DNA"/>
</dbReference>
<dbReference type="EMBL" id="CP001235">
    <property type="protein sequence ID" value="ACP09609.1"/>
    <property type="molecule type" value="Genomic_DNA"/>
</dbReference>
<dbReference type="RefSeq" id="WP_001180252.1">
    <property type="nucleotide sequence ID" value="NZ_JAACZH010000009.1"/>
</dbReference>
<dbReference type="PDB" id="6B7J">
    <property type="method" value="X-ray"/>
    <property type="resolution" value="1.44 A"/>
    <property type="chains" value="A/B=1-172"/>
</dbReference>
<dbReference type="PDBsum" id="6B7J"/>
<dbReference type="SMR" id="A5F850"/>
<dbReference type="GeneID" id="69719873"/>
<dbReference type="KEGG" id="vco:VC0395_A1091"/>
<dbReference type="KEGG" id="vcr:VC395_1603"/>
<dbReference type="PATRIC" id="fig|345073.21.peg.1550"/>
<dbReference type="eggNOG" id="COG0764">
    <property type="taxonomic scope" value="Bacteria"/>
</dbReference>
<dbReference type="HOGENOM" id="CLU_097925_0_0_6"/>
<dbReference type="OrthoDB" id="9786735at2"/>
<dbReference type="UniPathway" id="UPA00094"/>
<dbReference type="Proteomes" id="UP000000249">
    <property type="component" value="Chromosome 2"/>
</dbReference>
<dbReference type="GO" id="GO:0005737">
    <property type="term" value="C:cytoplasm"/>
    <property type="evidence" value="ECO:0007669"/>
    <property type="project" value="UniProtKB-SubCell"/>
</dbReference>
<dbReference type="GO" id="GO:0019171">
    <property type="term" value="F:(3R)-hydroxyacyl-[acyl-carrier-protein] dehydratase activity"/>
    <property type="evidence" value="ECO:0007669"/>
    <property type="project" value="UniProtKB-UniRule"/>
</dbReference>
<dbReference type="GO" id="GO:0034017">
    <property type="term" value="F:trans-2-decenoyl-acyl-carrier-protein isomerase activity"/>
    <property type="evidence" value="ECO:0007669"/>
    <property type="project" value="UniProtKB-UniRule"/>
</dbReference>
<dbReference type="GO" id="GO:0006636">
    <property type="term" value="P:unsaturated fatty acid biosynthetic process"/>
    <property type="evidence" value="ECO:0007669"/>
    <property type="project" value="UniProtKB-UniRule"/>
</dbReference>
<dbReference type="CDD" id="cd01287">
    <property type="entry name" value="FabA"/>
    <property type="match status" value="1"/>
</dbReference>
<dbReference type="FunFam" id="3.10.129.10:FF:000003">
    <property type="entry name" value="3-hydroxydecanoyl-[acyl-carrier-protein] dehydratase"/>
    <property type="match status" value="1"/>
</dbReference>
<dbReference type="Gene3D" id="3.10.129.10">
    <property type="entry name" value="Hotdog Thioesterase"/>
    <property type="match status" value="1"/>
</dbReference>
<dbReference type="HAMAP" id="MF_00405">
    <property type="entry name" value="FabA"/>
    <property type="match status" value="1"/>
</dbReference>
<dbReference type="InterPro" id="IPR010083">
    <property type="entry name" value="FabA"/>
</dbReference>
<dbReference type="InterPro" id="IPR013114">
    <property type="entry name" value="FabA_FabZ"/>
</dbReference>
<dbReference type="InterPro" id="IPR029069">
    <property type="entry name" value="HotDog_dom_sf"/>
</dbReference>
<dbReference type="NCBIfam" id="TIGR01749">
    <property type="entry name" value="fabA"/>
    <property type="match status" value="1"/>
</dbReference>
<dbReference type="NCBIfam" id="NF003509">
    <property type="entry name" value="PRK05174.1"/>
    <property type="match status" value="1"/>
</dbReference>
<dbReference type="PANTHER" id="PTHR30272">
    <property type="entry name" value="3-HYDROXYACYL-[ACYL-CARRIER-PROTEIN] DEHYDRATASE"/>
    <property type="match status" value="1"/>
</dbReference>
<dbReference type="PANTHER" id="PTHR30272:SF8">
    <property type="entry name" value="3-HYDROXYDECANOYL-[ACYL-CARRIER-PROTEIN] DEHYDRATASE"/>
    <property type="match status" value="1"/>
</dbReference>
<dbReference type="Pfam" id="PF07977">
    <property type="entry name" value="FabA"/>
    <property type="match status" value="1"/>
</dbReference>
<dbReference type="SUPFAM" id="SSF54637">
    <property type="entry name" value="Thioesterase/thiol ester dehydrase-isomerase"/>
    <property type="match status" value="1"/>
</dbReference>